<comment type="function">
    <text evidence="1 2">Cytoplasmic and mitochondrial threonylcarbamoyl-AMP synthase required for the formation of a threonylcarbamoyl group on adenosine at position 37 (t(6)A37) in tRNAs that read codons beginning with adenine. Catalyzes the conversion of L-threonine, HCO(3)(-)/CO(2) and ATP to give threonylcarbamoyl-AMP (TC-AMP) as the acyladenylate intermediate, with the release of diphosphate. Participates in t(6)A37 formation in cytoplasmic and mitochondrial tRNAs (By similarity). May regulate the activity of some transporters (By similarity).</text>
</comment>
<comment type="catalytic activity">
    <reaction evidence="2">
        <text>L-threonine + hydrogencarbonate + ATP = L-threonylcarbamoyladenylate + diphosphate + H2O</text>
        <dbReference type="Rhea" id="RHEA:36407"/>
        <dbReference type="ChEBI" id="CHEBI:15377"/>
        <dbReference type="ChEBI" id="CHEBI:17544"/>
        <dbReference type="ChEBI" id="CHEBI:30616"/>
        <dbReference type="ChEBI" id="CHEBI:33019"/>
        <dbReference type="ChEBI" id="CHEBI:57926"/>
        <dbReference type="ChEBI" id="CHEBI:73682"/>
        <dbReference type="EC" id="2.7.7.87"/>
    </reaction>
</comment>
<comment type="subunit">
    <text evidence="1">Interacts with RSC1A1.</text>
</comment>
<comment type="subcellular location">
    <subcellularLocation>
        <location evidence="2">Cytoplasm</location>
    </subcellularLocation>
    <subcellularLocation>
        <location evidence="2">Mitochondrion</location>
    </subcellularLocation>
    <subcellularLocation>
        <location evidence="1">Cell membrane</location>
        <topology evidence="1">Peripheral membrane protein</topology>
    </subcellularLocation>
    <text evidence="2">A large fraction localizes in the cytoplasm, whereas a smaller fraction is imported to mitochondria.</text>
</comment>
<comment type="domain">
    <text evidence="2">The mitochondrial targeting sequence (MTS) is weak and only mediates import of a small fraction of YRDC in mitochondria.</text>
</comment>
<comment type="similarity">
    <text evidence="5">Belongs to the SUA5 family.</text>
</comment>
<dbReference type="EC" id="2.7.7.87" evidence="2"/>
<dbReference type="EMBL" id="BC088428">
    <property type="protein sequence ID" value="AAH88428.1"/>
    <property type="molecule type" value="mRNA"/>
</dbReference>
<dbReference type="EMBL" id="BC099797">
    <property type="protein sequence ID" value="AAH99797.1"/>
    <property type="molecule type" value="mRNA"/>
</dbReference>
<dbReference type="RefSeq" id="NP_783194.2">
    <property type="nucleotide sequence ID" value="NM_175604.2"/>
</dbReference>
<dbReference type="SMR" id="Q499R4"/>
<dbReference type="FunCoup" id="Q499R4">
    <property type="interactions" value="772"/>
</dbReference>
<dbReference type="STRING" id="10116.ENSRNOP00000037600"/>
<dbReference type="iPTMnet" id="Q499R4"/>
<dbReference type="PhosphoSitePlus" id="Q499R4"/>
<dbReference type="jPOST" id="Q499R4"/>
<dbReference type="PaxDb" id="10116-ENSRNOP00000037600"/>
<dbReference type="GeneID" id="319113"/>
<dbReference type="KEGG" id="rno:319113"/>
<dbReference type="UCSC" id="RGD:708492">
    <property type="organism name" value="rat"/>
</dbReference>
<dbReference type="AGR" id="RGD:708492"/>
<dbReference type="CTD" id="79693"/>
<dbReference type="RGD" id="708492">
    <property type="gene designation" value="Yrdc"/>
</dbReference>
<dbReference type="VEuPathDB" id="HostDB:ENSRNOG00000025424"/>
<dbReference type="eggNOG" id="KOG3051">
    <property type="taxonomic scope" value="Eukaryota"/>
</dbReference>
<dbReference type="HOGENOM" id="CLU_031397_5_1_1"/>
<dbReference type="InParanoid" id="Q499R4"/>
<dbReference type="OrthoDB" id="3648309at2759"/>
<dbReference type="PhylomeDB" id="Q499R4"/>
<dbReference type="TreeFam" id="TF314358"/>
<dbReference type="ChiTaRS" id="Yrdc">
    <property type="organism name" value="rat"/>
</dbReference>
<dbReference type="PRO" id="PR:Q499R4"/>
<dbReference type="Proteomes" id="UP000002494">
    <property type="component" value="Chromosome 5"/>
</dbReference>
<dbReference type="Bgee" id="ENSRNOG00000025424">
    <property type="expression patterns" value="Expressed in pancreas and 20 other cell types or tissues"/>
</dbReference>
<dbReference type="GO" id="GO:0005737">
    <property type="term" value="C:cytoplasm"/>
    <property type="evidence" value="ECO:0000250"/>
    <property type="project" value="UniProtKB"/>
</dbReference>
<dbReference type="GO" id="GO:0016020">
    <property type="term" value="C:membrane"/>
    <property type="evidence" value="ECO:0000266"/>
    <property type="project" value="RGD"/>
</dbReference>
<dbReference type="GO" id="GO:0005739">
    <property type="term" value="C:mitochondrion"/>
    <property type="evidence" value="ECO:0000250"/>
    <property type="project" value="UniProtKB"/>
</dbReference>
<dbReference type="GO" id="GO:0005886">
    <property type="term" value="C:plasma membrane"/>
    <property type="evidence" value="ECO:0007669"/>
    <property type="project" value="UniProtKB-SubCell"/>
</dbReference>
<dbReference type="GO" id="GO:0003725">
    <property type="term" value="F:double-stranded RNA binding"/>
    <property type="evidence" value="ECO:0007669"/>
    <property type="project" value="InterPro"/>
</dbReference>
<dbReference type="GO" id="GO:0061710">
    <property type="term" value="F:L-threonylcarbamoyladenylate synthase"/>
    <property type="evidence" value="ECO:0000250"/>
    <property type="project" value="UniProtKB"/>
</dbReference>
<dbReference type="GO" id="GO:0016779">
    <property type="term" value="F:nucleotidyltransferase activity"/>
    <property type="evidence" value="ECO:0000318"/>
    <property type="project" value="GO_Central"/>
</dbReference>
<dbReference type="GO" id="GO:0000049">
    <property type="term" value="F:tRNA binding"/>
    <property type="evidence" value="ECO:0000318"/>
    <property type="project" value="GO_Central"/>
</dbReference>
<dbReference type="GO" id="GO:0051051">
    <property type="term" value="P:negative regulation of transport"/>
    <property type="evidence" value="ECO:0000266"/>
    <property type="project" value="RGD"/>
</dbReference>
<dbReference type="GO" id="GO:0006450">
    <property type="term" value="P:regulation of translational fidelity"/>
    <property type="evidence" value="ECO:0000318"/>
    <property type="project" value="GO_Central"/>
</dbReference>
<dbReference type="GO" id="GO:0002949">
    <property type="term" value="P:tRNA threonylcarbamoyladenosine modification"/>
    <property type="evidence" value="ECO:0000250"/>
    <property type="project" value="UniProtKB"/>
</dbReference>
<dbReference type="FunFam" id="3.90.870.10:FF:000007">
    <property type="entry name" value="YrdC N6-threonylcarbamoyltransferase domain containing"/>
    <property type="match status" value="1"/>
</dbReference>
<dbReference type="Gene3D" id="3.90.870.10">
    <property type="entry name" value="DHBP synthase"/>
    <property type="match status" value="1"/>
</dbReference>
<dbReference type="InterPro" id="IPR017945">
    <property type="entry name" value="DHBP_synth_RibB-like_a/b_dom"/>
</dbReference>
<dbReference type="InterPro" id="IPR006070">
    <property type="entry name" value="Sua5-like_dom"/>
</dbReference>
<dbReference type="InterPro" id="IPR050156">
    <property type="entry name" value="TC-AMP_synthase_SUA5"/>
</dbReference>
<dbReference type="NCBIfam" id="TIGR00057">
    <property type="entry name" value="L-threonylcarbamoyladenylate synthase"/>
    <property type="match status" value="1"/>
</dbReference>
<dbReference type="PANTHER" id="PTHR17490">
    <property type="entry name" value="SUA5"/>
    <property type="match status" value="1"/>
</dbReference>
<dbReference type="PANTHER" id="PTHR17490:SF10">
    <property type="entry name" value="THREONYLCARBAMOYL-AMP SYNTHASE"/>
    <property type="match status" value="1"/>
</dbReference>
<dbReference type="Pfam" id="PF01300">
    <property type="entry name" value="Sua5_yciO_yrdC"/>
    <property type="match status" value="1"/>
</dbReference>
<dbReference type="SUPFAM" id="SSF55821">
    <property type="entry name" value="YrdC/RibB"/>
    <property type="match status" value="1"/>
</dbReference>
<dbReference type="PROSITE" id="PS51163">
    <property type="entry name" value="YRDC"/>
    <property type="match status" value="1"/>
</dbReference>
<proteinExistence type="evidence at transcript level"/>
<sequence length="280" mass="29231">MSTARPCAGLRAAVAAGMGLSDGPAGSSRGCRLLRPPAPAPALPGARLLRLPESEAVEAASPERSGWTEALRAAVAELRAGAVVAVPTDTLYGLACSASCSAALSCVYRLKGRSEAKPLAVCLGRVADVYRYCQVRVPRELLEDLFPGPVTLVMERSEELNKDLNPFTPLVGIRIPDHAFMLDLAQMFGGPLALTSANLSSQASSLSVEEFQDLWPHLSLVIDGGPIGDSESPECRLGSTVVDLSVPGKFGIIRSGCALENTTAILQGKYGLLPSQGSCS</sequence>
<evidence type="ECO:0000250" key="1">
    <source>
        <dbReference type="UniProtKB" id="Q3U5F4"/>
    </source>
</evidence>
<evidence type="ECO:0000250" key="2">
    <source>
        <dbReference type="UniProtKB" id="Q86U90"/>
    </source>
</evidence>
<evidence type="ECO:0000255" key="3"/>
<evidence type="ECO:0000255" key="4">
    <source>
        <dbReference type="PROSITE-ProRule" id="PRU00518"/>
    </source>
</evidence>
<evidence type="ECO:0000305" key="5"/>
<evidence type="ECO:0000312" key="6">
    <source>
        <dbReference type="RGD" id="708492"/>
    </source>
</evidence>
<feature type="transit peptide" description="Mitochondrion" evidence="3">
    <location>
        <begin position="1"/>
        <end position="56"/>
    </location>
</feature>
<feature type="chain" id="PRO_0000341404" description="Threonylcarbamoyl-AMP synthase">
    <location>
        <begin position="57"/>
        <end position="280"/>
    </location>
</feature>
<feature type="domain" description="YrdC-like" evidence="4">
    <location>
        <begin position="68"/>
        <end position="258"/>
    </location>
</feature>
<feature type="modified residue" description="Phosphoserine" evidence="2">
    <location>
        <position position="61"/>
    </location>
</feature>
<accession>Q499R4</accession>
<accession>Q5I0E4</accession>
<organism>
    <name type="scientific">Rattus norvegicus</name>
    <name type="common">Rat</name>
    <dbReference type="NCBI Taxonomy" id="10116"/>
    <lineage>
        <taxon>Eukaryota</taxon>
        <taxon>Metazoa</taxon>
        <taxon>Chordata</taxon>
        <taxon>Craniata</taxon>
        <taxon>Vertebrata</taxon>
        <taxon>Euteleostomi</taxon>
        <taxon>Mammalia</taxon>
        <taxon>Eutheria</taxon>
        <taxon>Euarchontoglires</taxon>
        <taxon>Glires</taxon>
        <taxon>Rodentia</taxon>
        <taxon>Myomorpha</taxon>
        <taxon>Muroidea</taxon>
        <taxon>Muridae</taxon>
        <taxon>Murinae</taxon>
        <taxon>Rattus</taxon>
    </lineage>
</organism>
<name>YRDC_RAT</name>
<reference key="1">
    <citation type="journal article" date="2004" name="Genome Res.">
        <title>The status, quality, and expansion of the NIH full-length cDNA project: the Mammalian Gene Collection (MGC).</title>
        <authorList>
            <consortium name="The MGC Project Team"/>
        </authorList>
    </citation>
    <scope>NUCLEOTIDE SEQUENCE [LARGE SCALE MRNA]</scope>
    <source>
        <tissue>Lung</tissue>
        <tissue>Prostate</tissue>
    </source>
</reference>
<keyword id="KW-1003">Cell membrane</keyword>
<keyword id="KW-0963">Cytoplasm</keyword>
<keyword id="KW-0472">Membrane</keyword>
<keyword id="KW-0496">Mitochondrion</keyword>
<keyword id="KW-0597">Phosphoprotein</keyword>
<keyword id="KW-1185">Reference proteome</keyword>
<keyword id="KW-0808">Transferase</keyword>
<keyword id="KW-0809">Transit peptide</keyword>
<protein>
    <recommendedName>
        <fullName evidence="5">Threonylcarbamoyl-AMP synthase</fullName>
        <ecNumber evidence="2">2.7.7.87</ecNumber>
    </recommendedName>
</protein>
<gene>
    <name evidence="6" type="primary">Yrdc</name>
</gene>